<accession>Q8EKF2</accession>
<gene>
    <name evidence="1" type="primary">ribB</name>
    <name type="ordered locus">SO_0142</name>
</gene>
<protein>
    <recommendedName>
        <fullName evidence="1">3,4-dihydroxy-2-butanone 4-phosphate synthase</fullName>
        <shortName evidence="1">DHBP synthase</shortName>
        <ecNumber evidence="1">4.1.99.12</ecNumber>
    </recommendedName>
</protein>
<comment type="function">
    <text evidence="1">Catalyzes the conversion of D-ribulose 5-phosphate to formate and 3,4-dihydroxy-2-butanone 4-phosphate.</text>
</comment>
<comment type="catalytic activity">
    <reaction evidence="1">
        <text>D-ribulose 5-phosphate = (2S)-2-hydroxy-3-oxobutyl phosphate + formate + H(+)</text>
        <dbReference type="Rhea" id="RHEA:18457"/>
        <dbReference type="ChEBI" id="CHEBI:15378"/>
        <dbReference type="ChEBI" id="CHEBI:15740"/>
        <dbReference type="ChEBI" id="CHEBI:58121"/>
        <dbReference type="ChEBI" id="CHEBI:58830"/>
        <dbReference type="EC" id="4.1.99.12"/>
    </reaction>
</comment>
<comment type="cofactor">
    <cofactor evidence="1">
        <name>Mg(2+)</name>
        <dbReference type="ChEBI" id="CHEBI:18420"/>
    </cofactor>
    <cofactor evidence="1">
        <name>Mn(2+)</name>
        <dbReference type="ChEBI" id="CHEBI:29035"/>
    </cofactor>
    <text evidence="1">Binds 2 divalent metal cations per subunit. Magnesium or manganese.</text>
</comment>
<comment type="pathway">
    <text evidence="1">Cofactor biosynthesis; riboflavin biosynthesis; 2-hydroxy-3-oxobutyl phosphate from D-ribulose 5-phosphate: step 1/1.</text>
</comment>
<comment type="subunit">
    <text evidence="1">Homodimer.</text>
</comment>
<comment type="similarity">
    <text evidence="1">Belongs to the DHBP synthase family.</text>
</comment>
<organism>
    <name type="scientific">Shewanella oneidensis (strain ATCC 700550 / JCM 31522 / CIP 106686 / LMG 19005 / NCIMB 14063 / MR-1)</name>
    <dbReference type="NCBI Taxonomy" id="211586"/>
    <lineage>
        <taxon>Bacteria</taxon>
        <taxon>Pseudomonadati</taxon>
        <taxon>Pseudomonadota</taxon>
        <taxon>Gammaproteobacteria</taxon>
        <taxon>Alteromonadales</taxon>
        <taxon>Shewanellaceae</taxon>
        <taxon>Shewanella</taxon>
    </lineage>
</organism>
<evidence type="ECO:0000255" key="1">
    <source>
        <dbReference type="HAMAP-Rule" id="MF_00180"/>
    </source>
</evidence>
<feature type="chain" id="PRO_0000151811" description="3,4-dihydroxy-2-butanone 4-phosphate synthase">
    <location>
        <begin position="1"/>
        <end position="217"/>
    </location>
</feature>
<feature type="binding site" evidence="1">
    <location>
        <begin position="37"/>
        <end position="38"/>
    </location>
    <ligand>
        <name>D-ribulose 5-phosphate</name>
        <dbReference type="ChEBI" id="CHEBI:58121"/>
    </ligand>
</feature>
<feature type="binding site" evidence="1">
    <location>
        <position position="38"/>
    </location>
    <ligand>
        <name>Mg(2+)</name>
        <dbReference type="ChEBI" id="CHEBI:18420"/>
        <label>1</label>
    </ligand>
</feature>
<feature type="binding site" evidence="1">
    <location>
        <position position="38"/>
    </location>
    <ligand>
        <name>Mg(2+)</name>
        <dbReference type="ChEBI" id="CHEBI:18420"/>
        <label>2</label>
    </ligand>
</feature>
<feature type="binding site" evidence="1">
    <location>
        <position position="42"/>
    </location>
    <ligand>
        <name>D-ribulose 5-phosphate</name>
        <dbReference type="ChEBI" id="CHEBI:58121"/>
    </ligand>
</feature>
<feature type="binding site" evidence="1">
    <location>
        <begin position="150"/>
        <end position="154"/>
    </location>
    <ligand>
        <name>D-ribulose 5-phosphate</name>
        <dbReference type="ChEBI" id="CHEBI:58121"/>
    </ligand>
</feature>
<feature type="binding site" evidence="1">
    <location>
        <position position="153"/>
    </location>
    <ligand>
        <name>Mg(2+)</name>
        <dbReference type="ChEBI" id="CHEBI:18420"/>
        <label>2</label>
    </ligand>
</feature>
<feature type="binding site" evidence="1">
    <location>
        <position position="174"/>
    </location>
    <ligand>
        <name>D-ribulose 5-phosphate</name>
        <dbReference type="ChEBI" id="CHEBI:58121"/>
    </ligand>
</feature>
<feature type="site" description="Essential for catalytic activity" evidence="1">
    <location>
        <position position="136"/>
    </location>
</feature>
<feature type="site" description="Essential for catalytic activity" evidence="1">
    <location>
        <position position="174"/>
    </location>
</feature>
<reference key="1">
    <citation type="journal article" date="2002" name="Nat. Biotechnol.">
        <title>Genome sequence of the dissimilatory metal ion-reducing bacterium Shewanella oneidensis.</title>
        <authorList>
            <person name="Heidelberg J.F."/>
            <person name="Paulsen I.T."/>
            <person name="Nelson K.E."/>
            <person name="Gaidos E.J."/>
            <person name="Nelson W.C."/>
            <person name="Read T.D."/>
            <person name="Eisen J.A."/>
            <person name="Seshadri R."/>
            <person name="Ward N.L."/>
            <person name="Methe B.A."/>
            <person name="Clayton R.A."/>
            <person name="Meyer T."/>
            <person name="Tsapin A."/>
            <person name="Scott J."/>
            <person name="Beanan M.J."/>
            <person name="Brinkac L.M."/>
            <person name="Daugherty S.C."/>
            <person name="DeBoy R.T."/>
            <person name="Dodson R.J."/>
            <person name="Durkin A.S."/>
            <person name="Haft D.H."/>
            <person name="Kolonay J.F."/>
            <person name="Madupu R."/>
            <person name="Peterson J.D."/>
            <person name="Umayam L.A."/>
            <person name="White O."/>
            <person name="Wolf A.M."/>
            <person name="Vamathevan J.J."/>
            <person name="Weidman J.F."/>
            <person name="Impraim M."/>
            <person name="Lee K."/>
            <person name="Berry K.J."/>
            <person name="Lee C."/>
            <person name="Mueller J."/>
            <person name="Khouri H.M."/>
            <person name="Gill J."/>
            <person name="Utterback T.R."/>
            <person name="McDonald L.A."/>
            <person name="Feldblyum T.V."/>
            <person name="Smith H.O."/>
            <person name="Venter J.C."/>
            <person name="Nealson K.H."/>
            <person name="Fraser C.M."/>
        </authorList>
    </citation>
    <scope>NUCLEOTIDE SEQUENCE [LARGE SCALE GENOMIC DNA]</scope>
    <source>
        <strain>ATCC 700550 / JCM 31522 / CIP 106686 / LMG 19005 / NCIMB 14063 / MR-1</strain>
    </source>
</reference>
<proteinExistence type="inferred from homology"/>
<keyword id="KW-0456">Lyase</keyword>
<keyword id="KW-0460">Magnesium</keyword>
<keyword id="KW-0464">Manganese</keyword>
<keyword id="KW-0479">Metal-binding</keyword>
<keyword id="KW-1185">Reference proteome</keyword>
<keyword id="KW-0686">Riboflavin biosynthesis</keyword>
<name>RIBB_SHEON</name>
<sequence length="217" mass="22956">MNQSLLAPFGTAIERVEAGLNALRQGLGVLVVDDEDRENEGDLIFAAESLTNAQMAMLIRECSGIVCLCLPDEKVKALALPPMVENNSSQYGTAFTVSIEAKVGVTTGVSAADRVTTIKTAIADHAKPSDLARPGHVYPLRAQPGGVLTRRGHTEGTIDLMQLAGLKPAGVLCEVTNPDGTMARLPEIIAFGALHNMPVLTIEDIVVYRKSLLANVG</sequence>
<dbReference type="EC" id="4.1.99.12" evidence="1"/>
<dbReference type="EMBL" id="AE014299">
    <property type="protein sequence ID" value="AAN53229.1"/>
    <property type="molecule type" value="Genomic_DNA"/>
</dbReference>
<dbReference type="RefSeq" id="NP_715784.1">
    <property type="nucleotide sequence ID" value="NC_004347.2"/>
</dbReference>
<dbReference type="RefSeq" id="WP_011070545.1">
    <property type="nucleotide sequence ID" value="NC_004347.2"/>
</dbReference>
<dbReference type="SMR" id="Q8EKF2"/>
<dbReference type="STRING" id="211586.SO_0142"/>
<dbReference type="PaxDb" id="211586-SO_0142"/>
<dbReference type="KEGG" id="son:SO_0142"/>
<dbReference type="PATRIC" id="fig|211586.12.peg.136"/>
<dbReference type="eggNOG" id="COG0108">
    <property type="taxonomic scope" value="Bacteria"/>
</dbReference>
<dbReference type="HOGENOM" id="CLU_020273_3_0_6"/>
<dbReference type="OrthoDB" id="9793111at2"/>
<dbReference type="PhylomeDB" id="Q8EKF2"/>
<dbReference type="BioCyc" id="SONE211586:G1GMP-135-MONOMER"/>
<dbReference type="UniPathway" id="UPA00275">
    <property type="reaction ID" value="UER00399"/>
</dbReference>
<dbReference type="Proteomes" id="UP000008186">
    <property type="component" value="Chromosome"/>
</dbReference>
<dbReference type="GO" id="GO:0005829">
    <property type="term" value="C:cytosol"/>
    <property type="evidence" value="ECO:0000318"/>
    <property type="project" value="GO_Central"/>
</dbReference>
<dbReference type="GO" id="GO:0008686">
    <property type="term" value="F:3,4-dihydroxy-2-butanone-4-phosphate synthase activity"/>
    <property type="evidence" value="ECO:0000318"/>
    <property type="project" value="GO_Central"/>
</dbReference>
<dbReference type="GO" id="GO:0000287">
    <property type="term" value="F:magnesium ion binding"/>
    <property type="evidence" value="ECO:0007669"/>
    <property type="project" value="UniProtKB-UniRule"/>
</dbReference>
<dbReference type="GO" id="GO:0030145">
    <property type="term" value="F:manganese ion binding"/>
    <property type="evidence" value="ECO:0007669"/>
    <property type="project" value="UniProtKB-UniRule"/>
</dbReference>
<dbReference type="GO" id="GO:0009231">
    <property type="term" value="P:riboflavin biosynthetic process"/>
    <property type="evidence" value="ECO:0000318"/>
    <property type="project" value="GO_Central"/>
</dbReference>
<dbReference type="FunFam" id="3.90.870.10:FF:000002">
    <property type="entry name" value="3,4-dihydroxy-2-butanone 4-phosphate synthase"/>
    <property type="match status" value="1"/>
</dbReference>
<dbReference type="Gene3D" id="3.90.870.10">
    <property type="entry name" value="DHBP synthase"/>
    <property type="match status" value="1"/>
</dbReference>
<dbReference type="HAMAP" id="MF_00180">
    <property type="entry name" value="RibB"/>
    <property type="match status" value="1"/>
</dbReference>
<dbReference type="InterPro" id="IPR017945">
    <property type="entry name" value="DHBP_synth_RibB-like_a/b_dom"/>
</dbReference>
<dbReference type="InterPro" id="IPR000422">
    <property type="entry name" value="DHBP_synthase_RibB"/>
</dbReference>
<dbReference type="NCBIfam" id="TIGR00506">
    <property type="entry name" value="ribB"/>
    <property type="match status" value="1"/>
</dbReference>
<dbReference type="PANTHER" id="PTHR21327:SF38">
    <property type="entry name" value="3,4-DIHYDROXY-2-BUTANONE 4-PHOSPHATE SYNTHASE"/>
    <property type="match status" value="1"/>
</dbReference>
<dbReference type="PANTHER" id="PTHR21327">
    <property type="entry name" value="GTP CYCLOHYDROLASE II-RELATED"/>
    <property type="match status" value="1"/>
</dbReference>
<dbReference type="Pfam" id="PF00926">
    <property type="entry name" value="DHBP_synthase"/>
    <property type="match status" value="1"/>
</dbReference>
<dbReference type="SUPFAM" id="SSF55821">
    <property type="entry name" value="YrdC/RibB"/>
    <property type="match status" value="1"/>
</dbReference>